<proteinExistence type="evidence at transcript level"/>
<organism>
    <name type="scientific">Arabidopsis thaliana</name>
    <name type="common">Mouse-ear cress</name>
    <dbReference type="NCBI Taxonomy" id="3702"/>
    <lineage>
        <taxon>Eukaryota</taxon>
        <taxon>Viridiplantae</taxon>
        <taxon>Streptophyta</taxon>
        <taxon>Embryophyta</taxon>
        <taxon>Tracheophyta</taxon>
        <taxon>Spermatophyta</taxon>
        <taxon>Magnoliopsida</taxon>
        <taxon>eudicotyledons</taxon>
        <taxon>Gunneridae</taxon>
        <taxon>Pentapetalae</taxon>
        <taxon>rosids</taxon>
        <taxon>malvids</taxon>
        <taxon>Brassicales</taxon>
        <taxon>Brassicaceae</taxon>
        <taxon>Camelineae</taxon>
        <taxon>Arabidopsis</taxon>
    </lineage>
</organism>
<keyword id="KW-0025">Alternative splicing</keyword>
<keyword id="KW-0052">Apoplast</keyword>
<keyword id="KW-0134">Cell wall</keyword>
<keyword id="KW-0961">Cell wall biogenesis/degradation</keyword>
<keyword id="KW-1015">Disulfide bond</keyword>
<keyword id="KW-0325">Glycoprotein</keyword>
<keyword id="KW-0326">Glycosidase</keyword>
<keyword id="KW-0378">Hydrolase</keyword>
<keyword id="KW-1185">Reference proteome</keyword>
<keyword id="KW-0964">Secreted</keyword>
<keyword id="KW-0732">Signal</keyword>
<keyword id="KW-0808">Transferase</keyword>
<comment type="function">
    <text evidence="6">Catalyzes xyloglucan endohydrolysis (XEH) and/or endotransglycosylation (XET). Cleaves and religates xyloglucan polymers, an essential constituent of the primary cell wall, and thereby participates in cell wall construction of growing tissues. Involved in internodal cell elongation.</text>
</comment>
<comment type="catalytic activity">
    <reaction>
        <text>breaks a beta-(1-&gt;4) bond in the backbone of a xyloglucan and transfers the xyloglucanyl segment on to O-4 of the non-reducing terminal glucose residue of an acceptor, which can be a xyloglucan or an oligosaccharide of xyloglucan.</text>
        <dbReference type="EC" id="2.4.1.207"/>
    </reaction>
</comment>
<comment type="subcellular location">
    <subcellularLocation>
        <location evidence="7">Secreted</location>
        <location evidence="7">Cell wall</location>
    </subcellularLocation>
    <subcellularLocation>
        <location evidence="7">Secreted</location>
        <location evidence="7">Extracellular space</location>
        <location evidence="7">Apoplast</location>
    </subcellularLocation>
</comment>
<comment type="alternative products">
    <event type="alternative splicing"/>
    <isoform>
        <id>Q8LDW9-1</id>
        <name>1</name>
        <sequence type="displayed"/>
    </isoform>
    <text>A number of isoforms are produced. According to EST sequences.</text>
</comment>
<comment type="tissue specificity">
    <text evidence="5 6">Highly expressed in shoot apices. In the vegetative and reproductive phases, it accumulates in the shoot apex region, where cell division is most active. In the reproductive phase, it is also expressed in flower buds, flower stalks and internodes bearing flowers.</text>
</comment>
<comment type="PTM">
    <text evidence="1">Contains at least one intrachain disulfide bond essential for its enzymatic activity.</text>
</comment>
<comment type="similarity">
    <text evidence="7">Belongs to the glycosyl hydrolase 16 family. XTH group 1 subfamily.</text>
</comment>
<comment type="sequence caution" evidence="7">
    <conflict type="erroneous initiation">
        <sequence resource="EMBL-CDS" id="AAM62971"/>
    </conflict>
</comment>
<name>XTH9_ARATH</name>
<gene>
    <name type="primary">XTH9</name>
    <name type="synonym">EXGT-A6</name>
    <name type="synonym">XTR16</name>
    <name type="ordered locus">At4g03210</name>
    <name type="ORF">F4C21.14</name>
</gene>
<evidence type="ECO:0000250" key="1"/>
<evidence type="ECO:0000250" key="2">
    <source>
        <dbReference type="UniProtKB" id="Q8GZD5"/>
    </source>
</evidence>
<evidence type="ECO:0000255" key="3"/>
<evidence type="ECO:0000255" key="4">
    <source>
        <dbReference type="PROSITE-ProRule" id="PRU01098"/>
    </source>
</evidence>
<evidence type="ECO:0000269" key="5">
    <source>
    </source>
</evidence>
<evidence type="ECO:0000269" key="6">
    <source>
    </source>
</evidence>
<evidence type="ECO:0000305" key="7"/>
<protein>
    <recommendedName>
        <fullName>Xyloglucan endotransglucosylase/hydrolase protein 9</fullName>
        <shortName>At-XTH9</shortName>
        <shortName>XTH-9</shortName>
        <ecNumber>2.4.1.207</ecNumber>
    </recommendedName>
</protein>
<dbReference type="EC" id="2.4.1.207"/>
<dbReference type="EMBL" id="AC005275">
    <property type="protein sequence ID" value="AAD14449.1"/>
    <property type="molecule type" value="Genomic_DNA"/>
</dbReference>
<dbReference type="EMBL" id="AL161496">
    <property type="protein sequence ID" value="CAB77806.1"/>
    <property type="molecule type" value="Genomic_DNA"/>
</dbReference>
<dbReference type="EMBL" id="CP002687">
    <property type="protein sequence ID" value="AEE82292.1"/>
    <property type="molecule type" value="Genomic_DNA"/>
</dbReference>
<dbReference type="EMBL" id="AY044333">
    <property type="protein sequence ID" value="AAK73274.1"/>
    <property type="molecule type" value="mRNA"/>
</dbReference>
<dbReference type="EMBL" id="AY072353">
    <property type="protein sequence ID" value="AAL62345.1"/>
    <property type="molecule type" value="mRNA"/>
</dbReference>
<dbReference type="EMBL" id="BT002199">
    <property type="protein sequence ID" value="AAN72210.1"/>
    <property type="molecule type" value="mRNA"/>
</dbReference>
<dbReference type="EMBL" id="AY085753">
    <property type="protein sequence ID" value="AAM62971.1"/>
    <property type="status" value="ALT_INIT"/>
    <property type="molecule type" value="mRNA"/>
</dbReference>
<dbReference type="PIR" id="G85040">
    <property type="entry name" value="G85040"/>
</dbReference>
<dbReference type="RefSeq" id="NP_192230.1">
    <molecule id="Q8LDW9-1"/>
    <property type="nucleotide sequence ID" value="NM_116559.3"/>
</dbReference>
<dbReference type="SMR" id="Q8LDW9"/>
<dbReference type="FunCoup" id="Q8LDW9">
    <property type="interactions" value="59"/>
</dbReference>
<dbReference type="STRING" id="3702.Q8LDW9"/>
<dbReference type="CAZy" id="GH16">
    <property type="family name" value="Glycoside Hydrolase Family 16"/>
</dbReference>
<dbReference type="GlyCosmos" id="Q8LDW9">
    <property type="glycosylation" value="2 sites, No reported glycans"/>
</dbReference>
<dbReference type="GlyGen" id="Q8LDW9">
    <property type="glycosylation" value="2 sites"/>
</dbReference>
<dbReference type="iPTMnet" id="Q8LDW9"/>
<dbReference type="PaxDb" id="3702-AT4G03210.1"/>
<dbReference type="ProteomicsDB" id="242514">
    <molecule id="Q8LDW9-1"/>
</dbReference>
<dbReference type="EnsemblPlants" id="AT4G03210.1">
    <molecule id="Q8LDW9-1"/>
    <property type="protein sequence ID" value="AT4G03210.1"/>
    <property type="gene ID" value="AT4G03210"/>
</dbReference>
<dbReference type="GeneID" id="828024"/>
<dbReference type="Gramene" id="AT4G03210.1">
    <molecule id="Q8LDW9-1"/>
    <property type="protein sequence ID" value="AT4G03210.1"/>
    <property type="gene ID" value="AT4G03210"/>
</dbReference>
<dbReference type="KEGG" id="ath:AT4G03210"/>
<dbReference type="Araport" id="AT4G03210"/>
<dbReference type="TAIR" id="AT4G03210">
    <property type="gene designation" value="XTH9"/>
</dbReference>
<dbReference type="eggNOG" id="ENOG502QS4T">
    <property type="taxonomic scope" value="Eukaryota"/>
</dbReference>
<dbReference type="InParanoid" id="Q8LDW9"/>
<dbReference type="OMA" id="WALDHFT"/>
<dbReference type="OrthoDB" id="4781at2759"/>
<dbReference type="PhylomeDB" id="Q8LDW9"/>
<dbReference type="BioCyc" id="ARA:AT4G03210-MONOMER"/>
<dbReference type="PRO" id="PR:Q8LDW9"/>
<dbReference type="Proteomes" id="UP000006548">
    <property type="component" value="Chromosome 4"/>
</dbReference>
<dbReference type="ExpressionAtlas" id="Q8LDW9">
    <property type="expression patterns" value="baseline and differential"/>
</dbReference>
<dbReference type="GO" id="GO:0048046">
    <property type="term" value="C:apoplast"/>
    <property type="evidence" value="ECO:0007669"/>
    <property type="project" value="UniProtKB-SubCell"/>
</dbReference>
<dbReference type="GO" id="GO:0004553">
    <property type="term" value="F:hydrolase activity, hydrolyzing O-glycosyl compounds"/>
    <property type="evidence" value="ECO:0007669"/>
    <property type="project" value="InterPro"/>
</dbReference>
<dbReference type="GO" id="GO:0030247">
    <property type="term" value="F:polysaccharide binding"/>
    <property type="evidence" value="ECO:0000250"/>
    <property type="project" value="UniProtKB"/>
</dbReference>
<dbReference type="GO" id="GO:0016762">
    <property type="term" value="F:xyloglucan:xyloglucosyl transferase activity"/>
    <property type="evidence" value="ECO:0000250"/>
    <property type="project" value="TAIR"/>
</dbReference>
<dbReference type="GO" id="GO:0071555">
    <property type="term" value="P:cell wall organization"/>
    <property type="evidence" value="ECO:0007669"/>
    <property type="project" value="UniProtKB-KW"/>
</dbReference>
<dbReference type="GO" id="GO:0009834">
    <property type="term" value="P:plant-type secondary cell wall biogenesis"/>
    <property type="evidence" value="ECO:0000316"/>
    <property type="project" value="TAIR"/>
</dbReference>
<dbReference type="GO" id="GO:0010411">
    <property type="term" value="P:xyloglucan metabolic process"/>
    <property type="evidence" value="ECO:0007669"/>
    <property type="project" value="InterPro"/>
</dbReference>
<dbReference type="CDD" id="cd02176">
    <property type="entry name" value="GH16_XET"/>
    <property type="match status" value="1"/>
</dbReference>
<dbReference type="FunFam" id="2.60.120.200:FF:000025">
    <property type="entry name" value="Xyloglucan endotransglucosylase/hydrolase"/>
    <property type="match status" value="1"/>
</dbReference>
<dbReference type="Gene3D" id="2.60.120.200">
    <property type="match status" value="1"/>
</dbReference>
<dbReference type="InterPro" id="IPR044791">
    <property type="entry name" value="Beta-glucanase/XTH"/>
</dbReference>
<dbReference type="InterPro" id="IPR008264">
    <property type="entry name" value="Beta_glucanase"/>
</dbReference>
<dbReference type="InterPro" id="IPR013320">
    <property type="entry name" value="ConA-like_dom_sf"/>
</dbReference>
<dbReference type="InterPro" id="IPR000757">
    <property type="entry name" value="GH16"/>
</dbReference>
<dbReference type="InterPro" id="IPR010713">
    <property type="entry name" value="XET_C"/>
</dbReference>
<dbReference type="InterPro" id="IPR016455">
    <property type="entry name" value="XTH"/>
</dbReference>
<dbReference type="PANTHER" id="PTHR31062">
    <property type="entry name" value="XYLOGLUCAN ENDOTRANSGLUCOSYLASE/HYDROLASE PROTEIN 8-RELATED"/>
    <property type="match status" value="1"/>
</dbReference>
<dbReference type="Pfam" id="PF00722">
    <property type="entry name" value="Glyco_hydro_16"/>
    <property type="match status" value="1"/>
</dbReference>
<dbReference type="Pfam" id="PF06955">
    <property type="entry name" value="XET_C"/>
    <property type="match status" value="1"/>
</dbReference>
<dbReference type="PIRSF" id="PIRSF005604">
    <property type="entry name" value="XET"/>
    <property type="match status" value="1"/>
</dbReference>
<dbReference type="PRINTS" id="PR00737">
    <property type="entry name" value="GLHYDRLASE16"/>
</dbReference>
<dbReference type="SUPFAM" id="SSF49899">
    <property type="entry name" value="Concanavalin A-like lectins/glucanases"/>
    <property type="match status" value="1"/>
</dbReference>
<dbReference type="PROSITE" id="PS51762">
    <property type="entry name" value="GH16_2"/>
    <property type="match status" value="1"/>
</dbReference>
<reference key="1">
    <citation type="journal article" date="1999" name="Nature">
        <title>Sequence and analysis of chromosome 4 of the plant Arabidopsis thaliana.</title>
        <authorList>
            <person name="Mayer K.F.X."/>
            <person name="Schueller C."/>
            <person name="Wambutt R."/>
            <person name="Murphy G."/>
            <person name="Volckaert G."/>
            <person name="Pohl T."/>
            <person name="Duesterhoeft A."/>
            <person name="Stiekema W."/>
            <person name="Entian K.-D."/>
            <person name="Terryn N."/>
            <person name="Harris B."/>
            <person name="Ansorge W."/>
            <person name="Brandt P."/>
            <person name="Grivell L.A."/>
            <person name="Rieger M."/>
            <person name="Weichselgartner M."/>
            <person name="de Simone V."/>
            <person name="Obermaier B."/>
            <person name="Mache R."/>
            <person name="Mueller M."/>
            <person name="Kreis M."/>
            <person name="Delseny M."/>
            <person name="Puigdomenech P."/>
            <person name="Watson M."/>
            <person name="Schmidtheini T."/>
            <person name="Reichert B."/>
            <person name="Portetelle D."/>
            <person name="Perez-Alonso M."/>
            <person name="Boutry M."/>
            <person name="Bancroft I."/>
            <person name="Vos P."/>
            <person name="Hoheisel J."/>
            <person name="Zimmermann W."/>
            <person name="Wedler H."/>
            <person name="Ridley P."/>
            <person name="Langham S.-A."/>
            <person name="McCullagh B."/>
            <person name="Bilham L."/>
            <person name="Robben J."/>
            <person name="van der Schueren J."/>
            <person name="Grymonprez B."/>
            <person name="Chuang Y.-J."/>
            <person name="Vandenbussche F."/>
            <person name="Braeken M."/>
            <person name="Weltjens I."/>
            <person name="Voet M."/>
            <person name="Bastiaens I."/>
            <person name="Aert R."/>
            <person name="Defoor E."/>
            <person name="Weitzenegger T."/>
            <person name="Bothe G."/>
            <person name="Ramsperger U."/>
            <person name="Hilbert H."/>
            <person name="Braun M."/>
            <person name="Holzer E."/>
            <person name="Brandt A."/>
            <person name="Peters S."/>
            <person name="van Staveren M."/>
            <person name="Dirkse W."/>
            <person name="Mooijman P."/>
            <person name="Klein Lankhorst R."/>
            <person name="Rose M."/>
            <person name="Hauf J."/>
            <person name="Koetter P."/>
            <person name="Berneiser S."/>
            <person name="Hempel S."/>
            <person name="Feldpausch M."/>
            <person name="Lamberth S."/>
            <person name="Van den Daele H."/>
            <person name="De Keyser A."/>
            <person name="Buysshaert C."/>
            <person name="Gielen J."/>
            <person name="Villarroel R."/>
            <person name="De Clercq R."/>
            <person name="van Montagu M."/>
            <person name="Rogers J."/>
            <person name="Cronin A."/>
            <person name="Quail M.A."/>
            <person name="Bray-Allen S."/>
            <person name="Clark L."/>
            <person name="Doggett J."/>
            <person name="Hall S."/>
            <person name="Kay M."/>
            <person name="Lennard N."/>
            <person name="McLay K."/>
            <person name="Mayes R."/>
            <person name="Pettett A."/>
            <person name="Rajandream M.A."/>
            <person name="Lyne M."/>
            <person name="Benes V."/>
            <person name="Rechmann S."/>
            <person name="Borkova D."/>
            <person name="Bloecker H."/>
            <person name="Scharfe M."/>
            <person name="Grimm M."/>
            <person name="Loehnert T.-H."/>
            <person name="Dose S."/>
            <person name="de Haan M."/>
            <person name="Maarse A.C."/>
            <person name="Schaefer M."/>
            <person name="Mueller-Auer S."/>
            <person name="Gabel C."/>
            <person name="Fuchs M."/>
            <person name="Fartmann B."/>
            <person name="Granderath K."/>
            <person name="Dauner D."/>
            <person name="Herzl A."/>
            <person name="Neumann S."/>
            <person name="Argiriou A."/>
            <person name="Vitale D."/>
            <person name="Liguori R."/>
            <person name="Piravandi E."/>
            <person name="Massenet O."/>
            <person name="Quigley F."/>
            <person name="Clabauld G."/>
            <person name="Muendlein A."/>
            <person name="Felber R."/>
            <person name="Schnabl S."/>
            <person name="Hiller R."/>
            <person name="Schmidt W."/>
            <person name="Lecharny A."/>
            <person name="Aubourg S."/>
            <person name="Chefdor F."/>
            <person name="Cooke R."/>
            <person name="Berger C."/>
            <person name="Monfort A."/>
            <person name="Casacuberta E."/>
            <person name="Gibbons T."/>
            <person name="Weber N."/>
            <person name="Vandenbol M."/>
            <person name="Bargues M."/>
            <person name="Terol J."/>
            <person name="Torres A."/>
            <person name="Perez-Perez A."/>
            <person name="Purnelle B."/>
            <person name="Bent E."/>
            <person name="Johnson S."/>
            <person name="Tacon D."/>
            <person name="Jesse T."/>
            <person name="Heijnen L."/>
            <person name="Schwarz S."/>
            <person name="Scholler P."/>
            <person name="Heber S."/>
            <person name="Francs P."/>
            <person name="Bielke C."/>
            <person name="Frishman D."/>
            <person name="Haase D."/>
            <person name="Lemcke K."/>
            <person name="Mewes H.-W."/>
            <person name="Stocker S."/>
            <person name="Zaccaria P."/>
            <person name="Bevan M."/>
            <person name="Wilson R.K."/>
            <person name="de la Bastide M."/>
            <person name="Habermann K."/>
            <person name="Parnell L."/>
            <person name="Dedhia N."/>
            <person name="Gnoj L."/>
            <person name="Schutz K."/>
            <person name="Huang E."/>
            <person name="Spiegel L."/>
            <person name="Sekhon M."/>
            <person name="Murray J."/>
            <person name="Sheet P."/>
            <person name="Cordes M."/>
            <person name="Abu-Threideh J."/>
            <person name="Stoneking T."/>
            <person name="Kalicki J."/>
            <person name="Graves T."/>
            <person name="Harmon G."/>
            <person name="Edwards J."/>
            <person name="Latreille P."/>
            <person name="Courtney L."/>
            <person name="Cloud J."/>
            <person name="Abbott A."/>
            <person name="Scott K."/>
            <person name="Johnson D."/>
            <person name="Minx P."/>
            <person name="Bentley D."/>
            <person name="Fulton B."/>
            <person name="Miller N."/>
            <person name="Greco T."/>
            <person name="Kemp K."/>
            <person name="Kramer J."/>
            <person name="Fulton L."/>
            <person name="Mardis E."/>
            <person name="Dante M."/>
            <person name="Pepin K."/>
            <person name="Hillier L.W."/>
            <person name="Nelson J."/>
            <person name="Spieth J."/>
            <person name="Ryan E."/>
            <person name="Andrews S."/>
            <person name="Geisel C."/>
            <person name="Layman D."/>
            <person name="Du H."/>
            <person name="Ali J."/>
            <person name="Berghoff A."/>
            <person name="Jones K."/>
            <person name="Drone K."/>
            <person name="Cotton M."/>
            <person name="Joshu C."/>
            <person name="Antonoiu B."/>
            <person name="Zidanic M."/>
            <person name="Strong C."/>
            <person name="Sun H."/>
            <person name="Lamar B."/>
            <person name="Yordan C."/>
            <person name="Ma P."/>
            <person name="Zhong J."/>
            <person name="Preston R."/>
            <person name="Vil D."/>
            <person name="Shekher M."/>
            <person name="Matero A."/>
            <person name="Shah R."/>
            <person name="Swaby I.K."/>
            <person name="O'Shaughnessy A."/>
            <person name="Rodriguez M."/>
            <person name="Hoffman J."/>
            <person name="Till S."/>
            <person name="Granat S."/>
            <person name="Shohdy N."/>
            <person name="Hasegawa A."/>
            <person name="Hameed A."/>
            <person name="Lodhi M."/>
            <person name="Johnson A."/>
            <person name="Chen E."/>
            <person name="Marra M.A."/>
            <person name="Martienssen R."/>
            <person name="McCombie W.R."/>
        </authorList>
    </citation>
    <scope>NUCLEOTIDE SEQUENCE [LARGE SCALE GENOMIC DNA]</scope>
    <source>
        <strain>cv. Columbia</strain>
    </source>
</reference>
<reference key="2">
    <citation type="journal article" date="2017" name="Plant J.">
        <title>Araport11: a complete reannotation of the Arabidopsis thaliana reference genome.</title>
        <authorList>
            <person name="Cheng C.Y."/>
            <person name="Krishnakumar V."/>
            <person name="Chan A.P."/>
            <person name="Thibaud-Nissen F."/>
            <person name="Schobel S."/>
            <person name="Town C.D."/>
        </authorList>
    </citation>
    <scope>GENOME REANNOTATION</scope>
    <source>
        <strain>cv. Columbia</strain>
    </source>
</reference>
<reference key="3">
    <citation type="journal article" date="2003" name="Science">
        <title>Empirical analysis of transcriptional activity in the Arabidopsis genome.</title>
        <authorList>
            <person name="Yamada K."/>
            <person name="Lim J."/>
            <person name="Dale J.M."/>
            <person name="Chen H."/>
            <person name="Shinn P."/>
            <person name="Palm C.J."/>
            <person name="Southwick A.M."/>
            <person name="Wu H.C."/>
            <person name="Kim C.J."/>
            <person name="Nguyen M."/>
            <person name="Pham P.K."/>
            <person name="Cheuk R.F."/>
            <person name="Karlin-Newmann G."/>
            <person name="Liu S.X."/>
            <person name="Lam B."/>
            <person name="Sakano H."/>
            <person name="Wu T."/>
            <person name="Yu G."/>
            <person name="Miranda M."/>
            <person name="Quach H.L."/>
            <person name="Tripp M."/>
            <person name="Chang C.H."/>
            <person name="Lee J.M."/>
            <person name="Toriumi M.J."/>
            <person name="Chan M.M."/>
            <person name="Tang C.C."/>
            <person name="Onodera C.S."/>
            <person name="Deng J.M."/>
            <person name="Akiyama K."/>
            <person name="Ansari Y."/>
            <person name="Arakawa T."/>
            <person name="Banh J."/>
            <person name="Banno F."/>
            <person name="Bowser L."/>
            <person name="Brooks S.Y."/>
            <person name="Carninci P."/>
            <person name="Chao Q."/>
            <person name="Choy N."/>
            <person name="Enju A."/>
            <person name="Goldsmith A.D."/>
            <person name="Gurjal M."/>
            <person name="Hansen N.F."/>
            <person name="Hayashizaki Y."/>
            <person name="Johnson-Hopson C."/>
            <person name="Hsuan V.W."/>
            <person name="Iida K."/>
            <person name="Karnes M."/>
            <person name="Khan S."/>
            <person name="Koesema E."/>
            <person name="Ishida J."/>
            <person name="Jiang P.X."/>
            <person name="Jones T."/>
            <person name="Kawai J."/>
            <person name="Kamiya A."/>
            <person name="Meyers C."/>
            <person name="Nakajima M."/>
            <person name="Narusaka M."/>
            <person name="Seki M."/>
            <person name="Sakurai T."/>
            <person name="Satou M."/>
            <person name="Tamse R."/>
            <person name="Vaysberg M."/>
            <person name="Wallender E.K."/>
            <person name="Wong C."/>
            <person name="Yamamura Y."/>
            <person name="Yuan S."/>
            <person name="Shinozaki K."/>
            <person name="Davis R.W."/>
            <person name="Theologis A."/>
            <person name="Ecker J.R."/>
        </authorList>
    </citation>
    <scope>NUCLEOTIDE SEQUENCE [LARGE SCALE MRNA]</scope>
    <source>
        <strain>cv. Columbia</strain>
    </source>
</reference>
<reference key="4">
    <citation type="submission" date="2002-03" db="EMBL/GenBank/DDBJ databases">
        <title>Full-length cDNA from Arabidopsis thaliana.</title>
        <authorList>
            <person name="Brover V.V."/>
            <person name="Troukhan M.E."/>
            <person name="Alexandrov N.A."/>
            <person name="Lu Y.-P."/>
            <person name="Flavell R.B."/>
            <person name="Feldmann K.A."/>
        </authorList>
    </citation>
    <scope>NUCLEOTIDE SEQUENCE [LARGE SCALE MRNA]</scope>
</reference>
<reference key="5">
    <citation type="journal article" date="2000" name="Biosci. Biotechnol. Biochem.">
        <title>Systematic isolation of highly transcribed genes in inflorescence apices in Arabidopsis thaliana from an equalized cDNA library.</title>
        <authorList>
            <person name="Hyodo H."/>
            <person name="Takemura M."/>
            <person name="Yokota A."/>
            <person name="Ohyama K."/>
            <person name="Kohchi T."/>
        </authorList>
    </citation>
    <scope>PARTIAL NUCLEOTIDE SEQUENCE [MRNA]</scope>
    <source>
        <tissue>Flower</tissue>
    </source>
</reference>
<reference key="6">
    <citation type="journal article" date="2001" name="Plant Cell Physiol.">
        <title>A comprehensive expression analysis of all members of a gene family encoding cell-wall enzymes allowed us to predict cis-regulatory regions involved in cell-wall construction in specific organs of Arabidopsis.</title>
        <authorList>
            <person name="Yokoyama R."/>
            <person name="Nishitani K."/>
        </authorList>
    </citation>
    <scope>TISSUE SPECIFICITY</scope>
</reference>
<reference key="7">
    <citation type="journal article" date="2002" name="Plant Cell Physiol.">
        <title>The XTH family of enzymes involved in xyloglucan endotransglucosylation and endohydrolysis: current perspectives and a new unifying nomenclature.</title>
        <authorList>
            <person name="Rose J.K.C."/>
            <person name="Braam J."/>
            <person name="Fry S.C."/>
            <person name="Nishitani K."/>
        </authorList>
    </citation>
    <scope>NOMENCLATURE</scope>
</reference>
<reference key="8">
    <citation type="journal article" date="2003" name="Plant Mol. Biol.">
        <title>Active gene expression of a xyloglucan endotransglucosylase/hydrolase gene, XTH9, in inflorescence apices is related to cell elongation in Arabidopsis thaliana.</title>
        <authorList>
            <person name="Hyodo H."/>
            <person name="Yamakawa S."/>
            <person name="Takeda Y."/>
            <person name="Tsuduki M."/>
            <person name="Yokota A."/>
            <person name="Nishitani K."/>
            <person name="Kohchi T."/>
        </authorList>
    </citation>
    <scope>FUNCTION</scope>
    <scope>TISSUE SPECIFICITY</scope>
</reference>
<feature type="signal peptide" evidence="3">
    <location>
        <begin position="1"/>
        <end position="26"/>
    </location>
</feature>
<feature type="chain" id="PRO_0000011809" description="Xyloglucan endotransglucosylase/hydrolase protein 9">
    <location>
        <begin position="27"/>
        <end position="290"/>
    </location>
</feature>
<feature type="domain" description="GH16" evidence="4">
    <location>
        <begin position="27"/>
        <end position="215"/>
    </location>
</feature>
<feature type="active site" description="Nucleophile" evidence="2">
    <location>
        <position position="101"/>
    </location>
</feature>
<feature type="active site" description="Proton donor" evidence="2">
    <location>
        <position position="105"/>
    </location>
</feature>
<feature type="binding site" evidence="2">
    <location>
        <position position="105"/>
    </location>
    <ligand>
        <name>xyloglucan</name>
        <dbReference type="ChEBI" id="CHEBI:18233"/>
    </ligand>
</feature>
<feature type="binding site" evidence="2">
    <location>
        <begin position="118"/>
        <end position="120"/>
    </location>
    <ligand>
        <name>xyloglucan</name>
        <dbReference type="ChEBI" id="CHEBI:18233"/>
    </ligand>
</feature>
<feature type="binding site" evidence="2">
    <location>
        <begin position="128"/>
        <end position="130"/>
    </location>
    <ligand>
        <name>xyloglucan</name>
        <dbReference type="ChEBI" id="CHEBI:18233"/>
    </ligand>
</feature>
<feature type="binding site" evidence="2">
    <location>
        <begin position="194"/>
        <end position="195"/>
    </location>
    <ligand>
        <name>xyloglucan</name>
        <dbReference type="ChEBI" id="CHEBI:18233"/>
    </ligand>
</feature>
<feature type="binding site" evidence="2">
    <location>
        <position position="199"/>
    </location>
    <ligand>
        <name>xyloglucan</name>
        <dbReference type="ChEBI" id="CHEBI:18233"/>
    </ligand>
</feature>
<feature type="binding site" evidence="2">
    <location>
        <position position="276"/>
    </location>
    <ligand>
        <name>xyloglucan</name>
        <dbReference type="ChEBI" id="CHEBI:18233"/>
    </ligand>
</feature>
<feature type="site" description="Important for catalytic activity" evidence="2">
    <location>
        <position position="103"/>
    </location>
</feature>
<feature type="glycosylation site" description="N-linked (GlcNAc...) asparagine" evidence="3">
    <location>
        <position position="55"/>
    </location>
</feature>
<feature type="glycosylation site" description="N-linked (GlcNAc...) asparagine" evidence="3">
    <location>
        <position position="109"/>
    </location>
</feature>
<feature type="disulfide bond" evidence="2">
    <location>
        <begin position="223"/>
        <end position="234"/>
    </location>
</feature>
<feature type="disulfide bond" evidence="2">
    <location>
        <begin position="271"/>
        <end position="284"/>
    </location>
</feature>
<sequence>MVGMDLFKCVMMIMVLVVSCGEAVSGAKFDELYRSSWAMDHCVNEGEVTKLKLDNYSGAGFESRSKYLFGKVSIQIKLVEGDSAGTVTAFYMSSDGPNHNEFDFEFLGNTTGEPYIVQTNIYVNGVGNREQRLNLWFDPTTEFHTYSILWSKRSVVFMVDETPIRVQKNLEEKGIPFAKDQAMGVYSSIWNADDWATQGGLVKTDWSHAPFVASYKEFQIDACEIPTTTDLSKCNGDQKFWWDEPTVSELSLHQNHQLIWVRANHMIYDYCFDATRFPVTPLECQHHRHL</sequence>
<accession>Q8LDW9</accession>
<accession>Q9ZR10</accession>